<accession>P16845</accession>
<accession>Q910H5</accession>
<accession>Q910K8</accession>
<accession>Q910L5</accession>
<accession>Q910N2</accession>
<accession>Q910S8</accession>
<accession>Q910U1</accession>
<accession>Q918F6</accession>
<accession>Q918F7</accession>
<accession>Q918F8</accession>
<accession>Q918F9</accession>
<accession>Q918G0</accession>
<accession>Q918G1</accession>
<sequence>MARRLWILSLLAVTLTVALAAPSQKSKRSVTVEQPSTSADGSNTTPSKNVTLSQGGSTTDGDEDYSGEYDVLITDGDGSEHQQPQKTDEHKENQAKENEKKIQ</sequence>
<protein>
    <recommendedName>
        <fullName>Glycoprotein UL22A</fullName>
    </recommendedName>
</protein>
<reference key="1">
    <citation type="journal article" date="1990" name="Curr. Top. Microbiol. Immunol.">
        <title>Analysis of the protein-coding content of the sequence of human cytomegalovirus strain AD169.</title>
        <authorList>
            <person name="Chee M.S."/>
            <person name="Bankier A.T."/>
            <person name="Beck S."/>
            <person name="Bohni R."/>
            <person name="Brown C.M."/>
            <person name="Cerny R."/>
            <person name="Horsnell T."/>
            <person name="Hutchison C.A. III"/>
            <person name="Kouzarides T."/>
            <person name="Martignetti J.A."/>
            <person name="Preddie E."/>
            <person name="Satchwell S.C."/>
            <person name="Tomlinson P."/>
            <person name="Weston K.M."/>
            <person name="Barrell B.G."/>
        </authorList>
    </citation>
    <scope>NUCLEOTIDE SEQUENCE [LARGE SCALE GENOMIC DNA]</scope>
</reference>
<reference key="2">
    <citation type="journal article" date="2002" name="Virus Genes">
        <title>Characterisation of transcripts from the human cytomegalovirus genes TRL7, UL20a, UL36, UL65, UL94, US3 and US34.</title>
        <authorList>
            <person name="Scott G.M."/>
            <person name="Barrell B.G."/>
            <person name="Oram J."/>
            <person name="Rawlinson W.D."/>
        </authorList>
    </citation>
    <scope>NUCLEOTIDE SEQUENCE [GENOMIC DNA]</scope>
    <source>
        <strain>Isolate clinical 17A</strain>
        <strain>Isolate clinical 19A</strain>
        <strain>Isolate clinical 21A</strain>
        <strain>Isolate clinical 22A</strain>
        <strain>Isolate clinical 27A</strain>
        <strain>Isolate clinical 29A</strain>
        <strain>Isolate clinical 30A</strain>
        <strain>Isolate clinical 33B</strain>
        <strain>Isolate clinical 38A</strain>
        <strain>Isolate clinical 3A</strain>
        <strain>Isolate clinical 44A</strain>
        <strain>Isolate clinical 47A</strain>
        <strain>Isolate clinical 48A</strain>
        <strain>Isolate clinical 49A</strain>
        <strain>Isolate clinical 56A</strain>
        <strain>Isolate clinical 5A</strain>
        <strain>Isolate clinical 79A</strain>
        <strain>Isolate clinical 8A</strain>
        <strain>Isolate clinical 95A</strain>
        <strain>Isolate clinical 9A</strain>
    </source>
</reference>
<reference key="3">
    <citation type="journal article" date="2003" name="J. Gen. Virol.">
        <title>The human cytomegalovirus genome revisited: comparison with the chimpanzee cytomegalovirus genome.</title>
        <authorList>
            <person name="Davison A.J."/>
            <person name="Dolan A."/>
            <person name="Akter P."/>
            <person name="Addison C."/>
            <person name="Dargan D.J."/>
            <person name="Alcendor D.J."/>
            <person name="McGeoch D.J."/>
            <person name="Hayward G.S."/>
        </authorList>
    </citation>
    <scope>GENOME REANNOTATION</scope>
</reference>
<reference key="4">
    <citation type="journal article" date="2003" name="J. Gen. Virol.">
        <authorList>
            <person name="Davison A.J."/>
            <person name="Dolan A."/>
            <person name="Akter P."/>
            <person name="Addison C."/>
            <person name="Dargan D.J."/>
            <person name="Alcendor D.J."/>
            <person name="McGeoch D.J."/>
            <person name="Hayward G.S."/>
        </authorList>
    </citation>
    <scope>ERRATUM OF PUBMED:12533697</scope>
</reference>
<reference key="5">
    <citation type="journal article" date="2004" name="J. Virol.">
        <title>Identification of proteins in human cytomegalovirus (HCMV) particles: the HCMV proteome.</title>
        <authorList>
            <person name="Varnum S.M."/>
            <person name="Streblow D.N."/>
            <person name="Monroe M.E."/>
            <person name="Smith P."/>
            <person name="Auberry K.J."/>
            <person name="Pasa-Tolic L."/>
            <person name="Wang D."/>
            <person name="Camp D.G. II"/>
            <person name="Rodland K."/>
            <person name="Wiley S."/>
            <person name="Britt W."/>
            <person name="Shenk T."/>
            <person name="Smith R.D."/>
            <person name="Nelson J.A."/>
        </authorList>
    </citation>
    <scope>IDENTIFICATION</scope>
</reference>
<reference key="6">
    <citation type="journal article" date="2004" name="J. Virol.">
        <authorList>
            <person name="Varnum S.M."/>
            <person name="Streblow D.N."/>
            <person name="Monroe M.E."/>
            <person name="Smith P."/>
            <person name="Auberry K.J."/>
            <person name="Pasa-Tolic L."/>
            <person name="Wang D."/>
            <person name="Camp D.G. II"/>
            <person name="Rodland K."/>
            <person name="Wiley S."/>
            <person name="Britt W."/>
            <person name="Shenk T."/>
            <person name="Smith R.D."/>
            <person name="Nelson J.A."/>
        </authorList>
    </citation>
    <scope>ERRATUM OF PUBMED:15452216</scope>
</reference>
<organism>
    <name type="scientific">Human cytomegalovirus (strain AD169)</name>
    <name type="common">HHV-5</name>
    <name type="synonym">Human herpesvirus 5</name>
    <dbReference type="NCBI Taxonomy" id="10360"/>
    <lineage>
        <taxon>Viruses</taxon>
        <taxon>Duplodnaviria</taxon>
        <taxon>Heunggongvirae</taxon>
        <taxon>Peploviricota</taxon>
        <taxon>Herviviricetes</taxon>
        <taxon>Herpesvirales</taxon>
        <taxon>Orthoherpesviridae</taxon>
        <taxon>Betaherpesvirinae</taxon>
        <taxon>Cytomegalovirus</taxon>
        <taxon>Cytomegalovirus humanbeta5</taxon>
        <taxon>Human cytomegalovirus</taxon>
    </lineage>
</organism>
<keyword id="KW-0325">Glycoprotein</keyword>
<keyword id="KW-1185">Reference proteome</keyword>
<keyword id="KW-0732">Signal</keyword>
<keyword id="KW-0946">Virion</keyword>
<organismHost>
    <name type="scientific">Homo sapiens</name>
    <name type="common">Human</name>
    <dbReference type="NCBI Taxonomy" id="9606"/>
</organismHost>
<comment type="subcellular location">
    <subcellularLocation>
        <location>Virion</location>
    </subcellularLocation>
</comment>
<comment type="similarity">
    <text evidence="3">Belongs to the HHV-5 UL22A protein family.</text>
</comment>
<comment type="sequence caution" evidence="3">
    <conflict type="erroneous gene model prediction">
        <sequence resource="EMBL-CDS" id="CAA35421"/>
    </conflict>
</comment>
<dbReference type="EMBL" id="X17403">
    <property type="protein sequence ID" value="CAA35421.1"/>
    <property type="status" value="ALT_SEQ"/>
    <property type="molecule type" value="Genomic_DNA"/>
</dbReference>
<dbReference type="EMBL" id="AF413626">
    <property type="protein sequence ID" value="AAL08513.1"/>
    <property type="molecule type" value="Genomic_DNA"/>
</dbReference>
<dbReference type="EMBL" id="AF413627">
    <property type="protein sequence ID" value="AAL08514.1"/>
    <property type="molecule type" value="Genomic_DNA"/>
</dbReference>
<dbReference type="EMBL" id="AF413628">
    <property type="protein sequence ID" value="AAL08515.1"/>
    <property type="molecule type" value="Genomic_DNA"/>
</dbReference>
<dbReference type="EMBL" id="AF413629">
    <property type="protein sequence ID" value="AAL08516.1"/>
    <property type="molecule type" value="Genomic_DNA"/>
</dbReference>
<dbReference type="EMBL" id="AF413630">
    <property type="protein sequence ID" value="AAL08517.1"/>
    <property type="molecule type" value="Genomic_DNA"/>
</dbReference>
<dbReference type="EMBL" id="AF413631">
    <property type="protein sequence ID" value="AAL08518.1"/>
    <property type="molecule type" value="Genomic_DNA"/>
</dbReference>
<dbReference type="EMBL" id="AF413632">
    <property type="protein sequence ID" value="AAL08519.1"/>
    <property type="molecule type" value="Genomic_DNA"/>
</dbReference>
<dbReference type="EMBL" id="AF413633">
    <property type="protein sequence ID" value="AAL08520.1"/>
    <property type="molecule type" value="Genomic_DNA"/>
</dbReference>
<dbReference type="EMBL" id="AF413634">
    <property type="protein sequence ID" value="AAL08521.1"/>
    <property type="molecule type" value="Genomic_DNA"/>
</dbReference>
<dbReference type="EMBL" id="AF413635">
    <property type="protein sequence ID" value="AAL08522.1"/>
    <property type="molecule type" value="Genomic_DNA"/>
</dbReference>
<dbReference type="EMBL" id="AF413636">
    <property type="protein sequence ID" value="AAL08523.1"/>
    <property type="molecule type" value="Genomic_DNA"/>
</dbReference>
<dbReference type="EMBL" id="AF413637">
    <property type="protein sequence ID" value="AAL08524.1"/>
    <property type="molecule type" value="Genomic_DNA"/>
</dbReference>
<dbReference type="EMBL" id="AF413638">
    <property type="protein sequence ID" value="AAL08525.1"/>
    <property type="molecule type" value="Genomic_DNA"/>
</dbReference>
<dbReference type="EMBL" id="AF413639">
    <property type="protein sequence ID" value="AAL08526.1"/>
    <property type="molecule type" value="Genomic_DNA"/>
</dbReference>
<dbReference type="EMBL" id="AF413640">
    <property type="protein sequence ID" value="AAL08527.1"/>
    <property type="molecule type" value="Genomic_DNA"/>
</dbReference>
<dbReference type="EMBL" id="AF413641">
    <property type="protein sequence ID" value="AAL08528.1"/>
    <property type="molecule type" value="Genomic_DNA"/>
</dbReference>
<dbReference type="EMBL" id="AF413642">
    <property type="protein sequence ID" value="AAL08529.1"/>
    <property type="molecule type" value="Genomic_DNA"/>
</dbReference>
<dbReference type="EMBL" id="AF413643">
    <property type="protein sequence ID" value="AAL08530.1"/>
    <property type="molecule type" value="Genomic_DNA"/>
</dbReference>
<dbReference type="EMBL" id="AF413644">
    <property type="protein sequence ID" value="AAL08531.1"/>
    <property type="molecule type" value="Genomic_DNA"/>
</dbReference>
<dbReference type="EMBL" id="AF413645">
    <property type="protein sequence ID" value="AAL08532.1"/>
    <property type="molecule type" value="Genomic_DNA"/>
</dbReference>
<dbReference type="EMBL" id="BK000394">
    <property type="protein sequence ID" value="DAA00126.1"/>
    <property type="molecule type" value="Genomic_DNA"/>
</dbReference>
<dbReference type="PIR" id="S09785">
    <property type="entry name" value="S09785"/>
</dbReference>
<dbReference type="RefSeq" id="YP_081481.1">
    <property type="nucleotide sequence ID" value="NC_006273.2"/>
</dbReference>
<dbReference type="GlyCosmos" id="P16845">
    <property type="glycosylation" value="1 site, No reported glycans"/>
</dbReference>
<dbReference type="GeneID" id="3077571"/>
<dbReference type="KEGG" id="vg:3077571"/>
<dbReference type="Proteomes" id="UP000008991">
    <property type="component" value="Segment"/>
</dbReference>
<dbReference type="Proteomes" id="UP000008992">
    <property type="component" value="Segment"/>
</dbReference>
<dbReference type="GO" id="GO:0044423">
    <property type="term" value="C:virion component"/>
    <property type="evidence" value="ECO:0007669"/>
    <property type="project" value="UniProtKB-KW"/>
</dbReference>
<dbReference type="InterPro" id="IPR009245">
    <property type="entry name" value="Cytomegalo_UL22A"/>
</dbReference>
<dbReference type="Pfam" id="PF05984">
    <property type="entry name" value="Cytomega_UL20A"/>
    <property type="match status" value="1"/>
</dbReference>
<gene>
    <name type="primary">UL22A</name>
    <name type="synonym">UL20A</name>
</gene>
<evidence type="ECO:0000255" key="1"/>
<evidence type="ECO:0000256" key="2">
    <source>
        <dbReference type="SAM" id="MobiDB-lite"/>
    </source>
</evidence>
<evidence type="ECO:0000305" key="3"/>
<name>UL22A_HCMVA</name>
<proteinExistence type="inferred from homology"/>
<feature type="signal peptide" evidence="1">
    <location>
        <begin position="1"/>
        <end position="20"/>
    </location>
</feature>
<feature type="chain" id="PRO_0000037454" description="Glycoprotein UL22A">
    <location>
        <begin position="21"/>
        <end position="103"/>
    </location>
</feature>
<feature type="region of interest" description="Disordered" evidence="2">
    <location>
        <begin position="21"/>
        <end position="103"/>
    </location>
</feature>
<feature type="compositionally biased region" description="Polar residues" evidence="2">
    <location>
        <begin position="29"/>
        <end position="59"/>
    </location>
</feature>
<feature type="compositionally biased region" description="Basic and acidic residues" evidence="2">
    <location>
        <begin position="86"/>
        <end position="103"/>
    </location>
</feature>
<feature type="glycosylation site" description="N-linked (GlcNAc...) asparagine; by host" evidence="1">
    <location>
        <position position="49"/>
    </location>
</feature>
<feature type="sequence variant" description="In strain: Isolate clinical 48A.">
    <original>L</original>
    <variation>V</variation>
    <location>
        <position position="5"/>
    </location>
</feature>
<feature type="sequence variant" description="In strain: Isolate clinical 17A, Isolate clinical 27A, Isolate clinical 30A, Isolate clinical 33B, Isolate clinical 47A, Isolate clinical 48A and Isolate clinical 79A.">
    <location>
        <position position="10"/>
    </location>
</feature>
<feature type="sequence variant" description="In strain: Isolate clinical 5A, Isolate clinical 44A and Isolate clinical 49A.">
    <original>E</original>
    <variation>K</variation>
    <location>
        <position position="33"/>
    </location>
</feature>
<feature type="sequence variant" description="In strain: Isolate clinical 3A, Isolate clinical 5A, Isolate clinical 17A, Isolate clinical 19A, Isolate clinical 21A, Isolate clinical 22A, Isolate clinical 27A, Isolate clinical 29A, Isolate clinical 30A, Isolate clinical 33B, Isolate clinical 38A, Isolate clinical 44A, Isolate clinical 47A, Isolate clinical 48A, Isolate clinical 49A, Isolate clinical 56A and Isolate clinical 79A.">
    <original>ADGS</original>
    <variation>TNSDG</variation>
    <location>
        <begin position="39"/>
        <end position="42"/>
    </location>
</feature>
<feature type="sequence variant" description="In strain: Isolate clinical 29A and Isolate clinical 38A.">
    <original>N</original>
    <variation>NN</variation>
    <location>
        <position position="43"/>
    </location>
</feature>
<feature type="sequence variant" description="In strain: Isolate clinical 29A, Isolate clinical 38A and Isolate clinical 56A.">
    <original>PSKN</original>
    <variation>RNKD</variation>
    <location>
        <begin position="46"/>
        <end position="49"/>
    </location>
</feature>
<feature type="sequence variant" description="In strain: Isolate clinical 5A, Isolate clinical 17A, Isolate clinical 30A, Isolate clinical 33B, Isolate clinical 44A, Isolate clinical 47A, Isolate clinical 48A, Isolate clinical 49A and Isolate clinical 79A.">
    <original>D</original>
    <variation>N</variation>
    <location>
        <position position="62"/>
    </location>
</feature>
<feature type="sequence variant" description="In strain: Isolate clinical 5A, Isolate clinical 30A, Isolate clinical 33B, Isolate clinical 44A, Isolate clinical 47A, Isolate clinical 48A, Isolate clinical 49A and Isolate clinical 79A.">
    <original>E</original>
    <variation>EE</variation>
    <location>
        <position position="68"/>
    </location>
</feature>
<feature type="sequence variant" description="In strain: Isolate clinical 21A, Isolate clinical 22A, Isolate clinical 29A, Isolate clinical 38A and Isolate clinical 56A.">
    <original>E</original>
    <variation>GD</variation>
    <location>
        <position position="68"/>
    </location>
</feature>
<feature type="sequence variant" description="In strain: Isolate clinical 21A, Isolate clinical 22A, Isolate clinical 29A, Isolate clinical 38A and Isolate clinical 56A.">
    <original>G</original>
    <variation>T</variation>
    <location>
        <position position="76"/>
    </location>
</feature>
<feature type="sequence variant" description="In strain: Isolate clinical 5A, Isolate clinical 21A, Isolate clinical 22A, Isolate clinical 29A, Isolate clinical 38A, Isolate clinical 44A, Isolate clinical 49A and Isolate clinical 56A.">
    <original>S</original>
    <variation>G</variation>
    <location>
        <position position="79"/>
    </location>
</feature>
<feature type="sequence variant" description="In strain: Isolate clinical 21A, Isolate clinical 22A, Isolate clinical 29A, Isolate clinical 38A and Isolate clinical 56A.">
    <original>E</original>
    <variation>N</variation>
    <location>
        <position position="80"/>
    </location>
</feature>
<feature type="sequence variant" description="In strain: Isolate clinical 5A, Isolate clinical 17A, Isolate clinical 21A, Isolate clinical 22A, Isolate clinical 29A, Isolate clinical 30A, Isolate clinical 33B, Isolate clinical 38A, Isolate clinical 44A, Isolate clinical 47A, Isolate clinical 48A, clinical Isolate 49A, Isolate clinical 56A and Isolate clinical 79A.">
    <original>Q</original>
    <variation>QE</variation>
    <location>
        <position position="85"/>
    </location>
</feature>
<feature type="sequence variant" description="In strain: Isolate clinical 29A and Isolate clinical 38A.">
    <original>D</original>
    <variation>N</variation>
    <location>
        <position position="88"/>
    </location>
</feature>
<feature type="sequence variant" description="In strain: Isolate clinical 17A, Isolate clinical 21A and Isolate clinical 22A, Isolate clinical 30A, Isolate clinical 33B, Isolate clinical 47A, Isolate clinical 48A and Isolate clinical 79A.">
    <original>E</original>
    <variation>G</variation>
    <location>
        <position position="92"/>
    </location>
</feature>
<feature type="sequence variant" description="In strain: Isolate clinical 56A.">
    <original>E</original>
    <variation>K</variation>
    <location>
        <position position="92"/>
    </location>
</feature>
<feature type="sequence variant" description="In strain: Isolate clinical 5A, Isolate clinical 17A, Isolate clinical 21A, Isolate clinical 22A, Isolate clinical 29A, Isolate clinical 30A, Isolate clinical 33B, Isolate clinical 38A, Isolate clinical 44A, Isolate clinical 47A, Isolate clinical 48A, Isolate clinical 49A, Isolate clinical 56A and Isolate clinical 79A.">
    <original>NQA</original>
    <variation>EHT</variation>
    <location>
        <begin position="93"/>
        <end position="95"/>
    </location>
</feature>
<feature type="sequence variant" description="In strain: Isolate clinical 8A.">
    <original>N</original>
    <variation>D</variation>
    <location>
        <position position="93"/>
    </location>
</feature>
<feature type="sequence variant" description="In strain: Isolate clinical 27A.">
    <original>NEK</original>
    <variation>DDE</variation>
    <location>
        <begin position="98"/>
        <end position="100"/>
    </location>
</feature>
<feature type="sequence variant" description="In strain: Isolate clinical 49A.">
    <location>
        <position position="99"/>
    </location>
</feature>
<feature type="sequence variant" description="In strain: Isolate clinical 5A, Isolate clinical 17A, Isolate clinical 21A, Isolate clinical 22A, Isolate clinical 29A, Isolate clinical 30A, Isolate clinical 33B, Isolate clinical 38A, Isolate clinical 44A, Isolate clinical 47A, Isolate clinical 48A, Isolate clinical 49A, Isolate clinical 56A and Isolate clinical 79A.">
    <original>KI</original>
    <variation>T</variation>
    <location>
        <begin position="101"/>
        <end position="102"/>
    </location>
</feature>